<feature type="chain" id="PRO_0000383927" description="Queuine tRNA-ribosyltransferase accessory subunit 2">
    <location>
        <begin position="1"/>
        <end position="413"/>
    </location>
</feature>
<feature type="region of interest" description="Disordered" evidence="2">
    <location>
        <begin position="298"/>
        <end position="321"/>
    </location>
</feature>
<feature type="binding site" evidence="1">
    <location>
        <position position="349"/>
    </location>
    <ligand>
        <name>Zn(2+)</name>
        <dbReference type="ChEBI" id="CHEBI:29105"/>
    </ligand>
</feature>
<feature type="binding site" evidence="1">
    <location>
        <position position="351"/>
    </location>
    <ligand>
        <name>Zn(2+)</name>
        <dbReference type="ChEBI" id="CHEBI:29105"/>
    </ligand>
</feature>
<feature type="binding site" evidence="1">
    <location>
        <position position="354"/>
    </location>
    <ligand>
        <name>Zn(2+)</name>
        <dbReference type="ChEBI" id="CHEBI:29105"/>
    </ligand>
</feature>
<feature type="binding site" evidence="1">
    <location>
        <position position="380"/>
    </location>
    <ligand>
        <name>Zn(2+)</name>
        <dbReference type="ChEBI" id="CHEBI:29105"/>
    </ligand>
</feature>
<sequence length="413" mass="45465">MKLSISKVANGARLGVISNIGRNGDKTLEVPGCLLYTKTGSPPHLTHDTLQTIEGVPAVTHITLSTLAEHQEVLEEYKEGIGKFAGMPDAVLYCSTHDPVSPCPTGYNTNKAVSLWGAGGRIEMTAQKFISAQRVLRPDWFQCLSDGEVTPGGNSRKRVKKSVDRTLAFLDECLQLLSGHEDLKPCVLIGAVEGGDLLEERLRSARETAKRPVGGFLLDGFHGGSAEKELSLISAVTAALPEDKPRFIHGMGRPDEVLECVQRGVDLFDSCFPYRVTERGCALIFSHCYRPDPETAVLEKSETSGAERNGDVGAESEEPDADRAEMTSFEICLKEKRFREDFRPLLEGCSCYCCRNHSRAYVHHLLAAKELLAGILLMIHNFQHYFRFFGSIRAALRDGEINALAELIRKQSS</sequence>
<gene>
    <name evidence="1" type="primary">qtrt2</name>
    <name evidence="1" type="synonym">qtrtd1</name>
    <name type="ORF">TEgg038e14.1</name>
</gene>
<evidence type="ECO:0000255" key="1">
    <source>
        <dbReference type="HAMAP-Rule" id="MF_03043"/>
    </source>
</evidence>
<evidence type="ECO:0000256" key="2">
    <source>
        <dbReference type="SAM" id="MobiDB-lite"/>
    </source>
</evidence>
<accession>Q28DX0</accession>
<organism>
    <name type="scientific">Xenopus tropicalis</name>
    <name type="common">Western clawed frog</name>
    <name type="synonym">Silurana tropicalis</name>
    <dbReference type="NCBI Taxonomy" id="8364"/>
    <lineage>
        <taxon>Eukaryota</taxon>
        <taxon>Metazoa</taxon>
        <taxon>Chordata</taxon>
        <taxon>Craniata</taxon>
        <taxon>Vertebrata</taxon>
        <taxon>Euteleostomi</taxon>
        <taxon>Amphibia</taxon>
        <taxon>Batrachia</taxon>
        <taxon>Anura</taxon>
        <taxon>Pipoidea</taxon>
        <taxon>Pipidae</taxon>
        <taxon>Xenopodinae</taxon>
        <taxon>Xenopus</taxon>
        <taxon>Silurana</taxon>
    </lineage>
</organism>
<dbReference type="EMBL" id="CR848556">
    <property type="protein sequence ID" value="CAJ83627.1"/>
    <property type="molecule type" value="mRNA"/>
</dbReference>
<dbReference type="EMBL" id="BC135739">
    <property type="protein sequence ID" value="AAI35740.1"/>
    <property type="molecule type" value="mRNA"/>
</dbReference>
<dbReference type="RefSeq" id="NP_001016891.1">
    <property type="nucleotide sequence ID" value="NM_001016891.2"/>
</dbReference>
<dbReference type="RefSeq" id="XP_031751848.1">
    <property type="nucleotide sequence ID" value="XM_031895988.1"/>
</dbReference>
<dbReference type="RefSeq" id="XP_031751849.1">
    <property type="nucleotide sequence ID" value="XM_031895989.1"/>
</dbReference>
<dbReference type="RefSeq" id="XP_031751850.1">
    <property type="nucleotide sequence ID" value="XM_031895990.1"/>
</dbReference>
<dbReference type="SMR" id="Q28DX0"/>
<dbReference type="FunCoup" id="Q28DX0">
    <property type="interactions" value="1978"/>
</dbReference>
<dbReference type="STRING" id="8364.ENSXETP00000034531"/>
<dbReference type="PaxDb" id="8364-ENSXETP00000006099"/>
<dbReference type="GeneID" id="549645"/>
<dbReference type="KEGG" id="xtr:549645"/>
<dbReference type="AGR" id="Xenbase:XB-GENE-1007716"/>
<dbReference type="CTD" id="79691"/>
<dbReference type="Xenbase" id="XB-GENE-1007716">
    <property type="gene designation" value="qtrt2"/>
</dbReference>
<dbReference type="eggNOG" id="KOG3909">
    <property type="taxonomic scope" value="Eukaryota"/>
</dbReference>
<dbReference type="HOGENOM" id="CLU_037350_0_0_1"/>
<dbReference type="InParanoid" id="Q28DX0"/>
<dbReference type="OMA" id="MAGSRMK"/>
<dbReference type="OrthoDB" id="27601at2759"/>
<dbReference type="Proteomes" id="UP000008143">
    <property type="component" value="Chromosome 2"/>
</dbReference>
<dbReference type="GO" id="GO:0005737">
    <property type="term" value="C:cytoplasm"/>
    <property type="evidence" value="ECO:0000250"/>
    <property type="project" value="UniProtKB"/>
</dbReference>
<dbReference type="GO" id="GO:0005741">
    <property type="term" value="C:mitochondrial outer membrane"/>
    <property type="evidence" value="ECO:0007669"/>
    <property type="project" value="UniProtKB-SubCell"/>
</dbReference>
<dbReference type="GO" id="GO:0005739">
    <property type="term" value="C:mitochondrion"/>
    <property type="evidence" value="ECO:0000250"/>
    <property type="project" value="UniProtKB"/>
</dbReference>
<dbReference type="GO" id="GO:0046872">
    <property type="term" value="F:metal ion binding"/>
    <property type="evidence" value="ECO:0007669"/>
    <property type="project" value="UniProtKB-KW"/>
</dbReference>
<dbReference type="GO" id="GO:0046982">
    <property type="term" value="F:protein heterodimerization activity"/>
    <property type="evidence" value="ECO:0000250"/>
    <property type="project" value="UniProtKB"/>
</dbReference>
<dbReference type="GO" id="GO:0042803">
    <property type="term" value="F:protein homodimerization activity"/>
    <property type="evidence" value="ECO:0000250"/>
    <property type="project" value="UniProtKB"/>
</dbReference>
<dbReference type="GO" id="GO:0000049">
    <property type="term" value="F:tRNA binding"/>
    <property type="evidence" value="ECO:0000250"/>
    <property type="project" value="UniProtKB"/>
</dbReference>
<dbReference type="GO" id="GO:0008479">
    <property type="term" value="F:tRNA-guanosine(34) queuine transglycosylase activity"/>
    <property type="evidence" value="ECO:0007669"/>
    <property type="project" value="UniProtKB-UniRule"/>
</dbReference>
<dbReference type="GO" id="GO:0101030">
    <property type="term" value="P:tRNA-guanine transglycosylation"/>
    <property type="evidence" value="ECO:0007669"/>
    <property type="project" value="UniProtKB-UniRule"/>
</dbReference>
<dbReference type="Gene3D" id="3.20.20.105">
    <property type="entry name" value="Queuine tRNA-ribosyltransferase-like"/>
    <property type="match status" value="1"/>
</dbReference>
<dbReference type="HAMAP" id="MF_03043">
    <property type="entry name" value="QTRT2"/>
    <property type="match status" value="1"/>
</dbReference>
<dbReference type="InterPro" id="IPR028592">
    <property type="entry name" value="QTRTD1"/>
</dbReference>
<dbReference type="InterPro" id="IPR050852">
    <property type="entry name" value="Queuine_tRNA-ribosyltrfase"/>
</dbReference>
<dbReference type="InterPro" id="IPR036511">
    <property type="entry name" value="TGT-like_sf"/>
</dbReference>
<dbReference type="InterPro" id="IPR002616">
    <property type="entry name" value="tRNA_ribo_trans-like"/>
</dbReference>
<dbReference type="NCBIfam" id="TIGR00449">
    <property type="entry name" value="tgt_general"/>
    <property type="match status" value="1"/>
</dbReference>
<dbReference type="PANTHER" id="PTHR46064">
    <property type="entry name" value="QUEUINE TRNA-RIBOSYLTRANSFERASE ACCESSORY SUBUNIT 2"/>
    <property type="match status" value="1"/>
</dbReference>
<dbReference type="PANTHER" id="PTHR46064:SF1">
    <property type="entry name" value="QUEUINE TRNA-RIBOSYLTRANSFERASE ACCESSORY SUBUNIT 2"/>
    <property type="match status" value="1"/>
</dbReference>
<dbReference type="Pfam" id="PF01702">
    <property type="entry name" value="TGT"/>
    <property type="match status" value="1"/>
</dbReference>
<dbReference type="SUPFAM" id="SSF51713">
    <property type="entry name" value="tRNA-guanine transglycosylase"/>
    <property type="match status" value="1"/>
</dbReference>
<protein>
    <recommendedName>
        <fullName evidence="1">Queuine tRNA-ribosyltransferase accessory subunit 2</fullName>
    </recommendedName>
    <alternativeName>
        <fullName evidence="1">Queuine tRNA-ribosyltransferase domain-containing protein 1</fullName>
    </alternativeName>
</protein>
<name>QTRT2_XENTR</name>
<comment type="function">
    <text evidence="1">Non-catalytic subunit of the queuine tRNA-ribosyltransferase (TGT) that catalyzes the base-exchange of a guanine (G) residue with queuine (Q) at position 34 (anticodon wobble position) in tRNAs with GU(N) anticodons (tRNA-Asp, -Asn, -His and -Tyr), resulting in the hypermodified nucleoside queuosine (7-(((4,5-cis-dihydroxy-2-cyclopenten-1-yl)amino)methyl)-7-deazaguanosine).</text>
</comment>
<comment type="cofactor">
    <cofactor evidence="1">
        <name>Zn(2+)</name>
        <dbReference type="ChEBI" id="CHEBI:29105"/>
    </cofactor>
    <text evidence="1">Binds 1 zinc ion per subunit.</text>
</comment>
<comment type="subunit">
    <text evidence="1">Heterodimer of a catalytic subunit qtrt1 and an accessory subunit qtrt2.</text>
</comment>
<comment type="subcellular location">
    <subcellularLocation>
        <location evidence="1">Cytoplasm</location>
    </subcellularLocation>
    <subcellularLocation>
        <location evidence="1">Mitochondrion outer membrane</location>
        <topology evidence="1">Peripheral membrane protein</topology>
        <orientation evidence="1">Cytoplasmic side</orientation>
    </subcellularLocation>
    <text evidence="1">May associate with the mitochondrion outer membrane.</text>
</comment>
<comment type="similarity">
    <text evidence="1">Belongs to the queuine tRNA-ribosyltransferase family. QTRT2 subfamily.</text>
</comment>
<reference key="1">
    <citation type="submission" date="2006-10" db="EMBL/GenBank/DDBJ databases">
        <authorList>
            <consortium name="Sanger Xenopus tropicalis EST/cDNA project"/>
        </authorList>
    </citation>
    <scope>NUCLEOTIDE SEQUENCE [LARGE SCALE MRNA]</scope>
    <source>
        <tissue>Egg</tissue>
    </source>
</reference>
<reference key="2">
    <citation type="submission" date="2007-03" db="EMBL/GenBank/DDBJ databases">
        <authorList>
            <consortium name="NIH - Xenopus Gene Collection (XGC) project"/>
        </authorList>
    </citation>
    <scope>NUCLEOTIDE SEQUENCE [LARGE SCALE MRNA]</scope>
    <source>
        <tissue>Embryo</tissue>
    </source>
</reference>
<proteinExistence type="evidence at transcript level"/>
<keyword id="KW-0963">Cytoplasm</keyword>
<keyword id="KW-0472">Membrane</keyword>
<keyword id="KW-0479">Metal-binding</keyword>
<keyword id="KW-0496">Mitochondrion</keyword>
<keyword id="KW-1000">Mitochondrion outer membrane</keyword>
<keyword id="KW-1185">Reference proteome</keyword>
<keyword id="KW-0819">tRNA processing</keyword>
<keyword id="KW-0862">Zinc</keyword>